<comment type="function">
    <text evidence="1">DNA ligase that catalyzes the formation of phosphodiester linkages between 5'-phosphoryl and 3'-hydroxyl groups in double-stranded DNA using NAD as a coenzyme and as the energy source for the reaction. It is essential for DNA replication and repair of damaged DNA.</text>
</comment>
<comment type="catalytic activity">
    <reaction evidence="1">
        <text>NAD(+) + (deoxyribonucleotide)n-3'-hydroxyl + 5'-phospho-(deoxyribonucleotide)m = (deoxyribonucleotide)n+m + AMP + beta-nicotinamide D-nucleotide.</text>
        <dbReference type="EC" id="6.5.1.2"/>
    </reaction>
</comment>
<comment type="cofactor">
    <cofactor evidence="1">
        <name>Mg(2+)</name>
        <dbReference type="ChEBI" id="CHEBI:18420"/>
    </cofactor>
    <cofactor evidence="1">
        <name>Mn(2+)</name>
        <dbReference type="ChEBI" id="CHEBI:29035"/>
    </cofactor>
</comment>
<comment type="similarity">
    <text evidence="1">Belongs to the NAD-dependent DNA ligase family. LigA subfamily.</text>
</comment>
<dbReference type="EC" id="6.5.1.2" evidence="1"/>
<dbReference type="EMBL" id="CP000803">
    <property type="protein sequence ID" value="ABU61187.1"/>
    <property type="molecule type" value="Genomic_DNA"/>
</dbReference>
<dbReference type="RefSeq" id="WP_010032148.1">
    <property type="nucleotide sequence ID" value="NC_009749.1"/>
</dbReference>
<dbReference type="SMR" id="A7NB34"/>
<dbReference type="KEGG" id="fta:FTA_0711"/>
<dbReference type="HOGENOM" id="CLU_007764_2_1_6"/>
<dbReference type="GO" id="GO:0005829">
    <property type="term" value="C:cytosol"/>
    <property type="evidence" value="ECO:0007669"/>
    <property type="project" value="TreeGrafter"/>
</dbReference>
<dbReference type="GO" id="GO:0003677">
    <property type="term" value="F:DNA binding"/>
    <property type="evidence" value="ECO:0007669"/>
    <property type="project" value="InterPro"/>
</dbReference>
<dbReference type="GO" id="GO:0003911">
    <property type="term" value="F:DNA ligase (NAD+) activity"/>
    <property type="evidence" value="ECO:0007669"/>
    <property type="project" value="UniProtKB-UniRule"/>
</dbReference>
<dbReference type="GO" id="GO:0046872">
    <property type="term" value="F:metal ion binding"/>
    <property type="evidence" value="ECO:0007669"/>
    <property type="project" value="UniProtKB-KW"/>
</dbReference>
<dbReference type="GO" id="GO:0006281">
    <property type="term" value="P:DNA repair"/>
    <property type="evidence" value="ECO:0007669"/>
    <property type="project" value="UniProtKB-KW"/>
</dbReference>
<dbReference type="GO" id="GO:0006260">
    <property type="term" value="P:DNA replication"/>
    <property type="evidence" value="ECO:0007669"/>
    <property type="project" value="UniProtKB-KW"/>
</dbReference>
<dbReference type="CDD" id="cd17748">
    <property type="entry name" value="BRCT_DNA_ligase_like"/>
    <property type="match status" value="1"/>
</dbReference>
<dbReference type="CDD" id="cd00114">
    <property type="entry name" value="LIGANc"/>
    <property type="match status" value="1"/>
</dbReference>
<dbReference type="FunFam" id="1.10.150.20:FF:000007">
    <property type="entry name" value="DNA ligase"/>
    <property type="match status" value="1"/>
</dbReference>
<dbReference type="FunFam" id="2.40.50.140:FF:000012">
    <property type="entry name" value="DNA ligase"/>
    <property type="match status" value="1"/>
</dbReference>
<dbReference type="FunFam" id="3.30.470.30:FF:000001">
    <property type="entry name" value="DNA ligase"/>
    <property type="match status" value="1"/>
</dbReference>
<dbReference type="Gene3D" id="6.20.10.30">
    <property type="match status" value="1"/>
</dbReference>
<dbReference type="Gene3D" id="1.10.150.20">
    <property type="entry name" value="5' to 3' exonuclease, C-terminal subdomain"/>
    <property type="match status" value="2"/>
</dbReference>
<dbReference type="Gene3D" id="3.40.50.10190">
    <property type="entry name" value="BRCT domain"/>
    <property type="match status" value="1"/>
</dbReference>
<dbReference type="Gene3D" id="3.30.470.30">
    <property type="entry name" value="DNA ligase/mRNA capping enzyme"/>
    <property type="match status" value="1"/>
</dbReference>
<dbReference type="Gene3D" id="1.10.287.610">
    <property type="entry name" value="Helix hairpin bin"/>
    <property type="match status" value="1"/>
</dbReference>
<dbReference type="Gene3D" id="2.40.50.140">
    <property type="entry name" value="Nucleic acid-binding proteins"/>
    <property type="match status" value="1"/>
</dbReference>
<dbReference type="HAMAP" id="MF_01588">
    <property type="entry name" value="DNA_ligase_A"/>
    <property type="match status" value="1"/>
</dbReference>
<dbReference type="InterPro" id="IPR001357">
    <property type="entry name" value="BRCT_dom"/>
</dbReference>
<dbReference type="InterPro" id="IPR036420">
    <property type="entry name" value="BRCT_dom_sf"/>
</dbReference>
<dbReference type="InterPro" id="IPR041663">
    <property type="entry name" value="DisA/LigA_HHH"/>
</dbReference>
<dbReference type="InterPro" id="IPR001679">
    <property type="entry name" value="DNA_ligase"/>
</dbReference>
<dbReference type="InterPro" id="IPR033136">
    <property type="entry name" value="DNA_ligase_CS"/>
</dbReference>
<dbReference type="InterPro" id="IPR013839">
    <property type="entry name" value="DNAligase_adenylation"/>
</dbReference>
<dbReference type="InterPro" id="IPR013840">
    <property type="entry name" value="DNAligase_N"/>
</dbReference>
<dbReference type="InterPro" id="IPR003583">
    <property type="entry name" value="Hlx-hairpin-Hlx_DNA-bd_motif"/>
</dbReference>
<dbReference type="InterPro" id="IPR012340">
    <property type="entry name" value="NA-bd_OB-fold"/>
</dbReference>
<dbReference type="InterPro" id="IPR004150">
    <property type="entry name" value="NAD_DNA_ligase_OB"/>
</dbReference>
<dbReference type="InterPro" id="IPR010994">
    <property type="entry name" value="RuvA_2-like"/>
</dbReference>
<dbReference type="InterPro" id="IPR004149">
    <property type="entry name" value="Znf_DNAligase_C4"/>
</dbReference>
<dbReference type="NCBIfam" id="TIGR00575">
    <property type="entry name" value="dnlj"/>
    <property type="match status" value="1"/>
</dbReference>
<dbReference type="NCBIfam" id="NF005932">
    <property type="entry name" value="PRK07956.1"/>
    <property type="match status" value="1"/>
</dbReference>
<dbReference type="PANTHER" id="PTHR23389">
    <property type="entry name" value="CHROMOSOME TRANSMISSION FIDELITY FACTOR 18"/>
    <property type="match status" value="1"/>
</dbReference>
<dbReference type="PANTHER" id="PTHR23389:SF9">
    <property type="entry name" value="DNA LIGASE"/>
    <property type="match status" value="1"/>
</dbReference>
<dbReference type="Pfam" id="PF00533">
    <property type="entry name" value="BRCT"/>
    <property type="match status" value="1"/>
</dbReference>
<dbReference type="Pfam" id="PF01653">
    <property type="entry name" value="DNA_ligase_aden"/>
    <property type="match status" value="1"/>
</dbReference>
<dbReference type="Pfam" id="PF03120">
    <property type="entry name" value="DNA_ligase_OB"/>
    <property type="match status" value="1"/>
</dbReference>
<dbReference type="Pfam" id="PF03119">
    <property type="entry name" value="DNA_ligase_ZBD"/>
    <property type="match status" value="1"/>
</dbReference>
<dbReference type="Pfam" id="PF12826">
    <property type="entry name" value="HHH_2"/>
    <property type="match status" value="1"/>
</dbReference>
<dbReference type="Pfam" id="PF22745">
    <property type="entry name" value="Nlig-Ia"/>
    <property type="match status" value="1"/>
</dbReference>
<dbReference type="PIRSF" id="PIRSF001604">
    <property type="entry name" value="LigA"/>
    <property type="match status" value="1"/>
</dbReference>
<dbReference type="SMART" id="SM00292">
    <property type="entry name" value="BRCT"/>
    <property type="match status" value="1"/>
</dbReference>
<dbReference type="SMART" id="SM00278">
    <property type="entry name" value="HhH1"/>
    <property type="match status" value="4"/>
</dbReference>
<dbReference type="SMART" id="SM00532">
    <property type="entry name" value="LIGANc"/>
    <property type="match status" value="1"/>
</dbReference>
<dbReference type="SUPFAM" id="SSF52113">
    <property type="entry name" value="BRCT domain"/>
    <property type="match status" value="1"/>
</dbReference>
<dbReference type="SUPFAM" id="SSF56091">
    <property type="entry name" value="DNA ligase/mRNA capping enzyme, catalytic domain"/>
    <property type="match status" value="1"/>
</dbReference>
<dbReference type="SUPFAM" id="SSF50249">
    <property type="entry name" value="Nucleic acid-binding proteins"/>
    <property type="match status" value="1"/>
</dbReference>
<dbReference type="SUPFAM" id="SSF47781">
    <property type="entry name" value="RuvA domain 2-like"/>
    <property type="match status" value="1"/>
</dbReference>
<dbReference type="PROSITE" id="PS50172">
    <property type="entry name" value="BRCT"/>
    <property type="match status" value="1"/>
</dbReference>
<dbReference type="PROSITE" id="PS01056">
    <property type="entry name" value="DNA_LIGASE_N2"/>
    <property type="match status" value="1"/>
</dbReference>
<evidence type="ECO:0000255" key="1">
    <source>
        <dbReference type="HAMAP-Rule" id="MF_01588"/>
    </source>
</evidence>
<keyword id="KW-0227">DNA damage</keyword>
<keyword id="KW-0234">DNA repair</keyword>
<keyword id="KW-0235">DNA replication</keyword>
<keyword id="KW-0436">Ligase</keyword>
<keyword id="KW-0460">Magnesium</keyword>
<keyword id="KW-0464">Manganese</keyword>
<keyword id="KW-0479">Metal-binding</keyword>
<keyword id="KW-0520">NAD</keyword>
<keyword id="KW-0862">Zinc</keyword>
<organism>
    <name type="scientific">Francisella tularensis subsp. holarctica (strain FTNF002-00 / FTA)</name>
    <dbReference type="NCBI Taxonomy" id="458234"/>
    <lineage>
        <taxon>Bacteria</taxon>
        <taxon>Pseudomonadati</taxon>
        <taxon>Pseudomonadota</taxon>
        <taxon>Gammaproteobacteria</taxon>
        <taxon>Thiotrichales</taxon>
        <taxon>Francisellaceae</taxon>
        <taxon>Francisella</taxon>
    </lineage>
</organism>
<accession>A7NB34</accession>
<feature type="chain" id="PRO_0000313237" description="DNA ligase">
    <location>
        <begin position="1"/>
        <end position="678"/>
    </location>
</feature>
<feature type="domain" description="BRCT" evidence="1">
    <location>
        <begin position="602"/>
        <end position="678"/>
    </location>
</feature>
<feature type="active site" description="N6-AMP-lysine intermediate" evidence="1">
    <location>
        <position position="124"/>
    </location>
</feature>
<feature type="binding site" evidence="1">
    <location>
        <begin position="47"/>
        <end position="51"/>
    </location>
    <ligand>
        <name>NAD(+)</name>
        <dbReference type="ChEBI" id="CHEBI:57540"/>
    </ligand>
</feature>
<feature type="binding site" evidence="1">
    <location>
        <begin position="96"/>
        <end position="97"/>
    </location>
    <ligand>
        <name>NAD(+)</name>
        <dbReference type="ChEBI" id="CHEBI:57540"/>
    </ligand>
</feature>
<feature type="binding site" evidence="1">
    <location>
        <position position="122"/>
    </location>
    <ligand>
        <name>NAD(+)</name>
        <dbReference type="ChEBI" id="CHEBI:57540"/>
    </ligand>
</feature>
<feature type="binding site" evidence="1">
    <location>
        <position position="145"/>
    </location>
    <ligand>
        <name>NAD(+)</name>
        <dbReference type="ChEBI" id="CHEBI:57540"/>
    </ligand>
</feature>
<feature type="binding site" evidence="1">
    <location>
        <position position="182"/>
    </location>
    <ligand>
        <name>NAD(+)</name>
        <dbReference type="ChEBI" id="CHEBI:57540"/>
    </ligand>
</feature>
<feature type="binding site" evidence="1">
    <location>
        <position position="300"/>
    </location>
    <ligand>
        <name>NAD(+)</name>
        <dbReference type="ChEBI" id="CHEBI:57540"/>
    </ligand>
</feature>
<feature type="binding site" evidence="1">
    <location>
        <position position="324"/>
    </location>
    <ligand>
        <name>NAD(+)</name>
        <dbReference type="ChEBI" id="CHEBI:57540"/>
    </ligand>
</feature>
<feature type="binding site" evidence="1">
    <location>
        <position position="418"/>
    </location>
    <ligand>
        <name>Zn(2+)</name>
        <dbReference type="ChEBI" id="CHEBI:29105"/>
    </ligand>
</feature>
<feature type="binding site" evidence="1">
    <location>
        <position position="421"/>
    </location>
    <ligand>
        <name>Zn(2+)</name>
        <dbReference type="ChEBI" id="CHEBI:29105"/>
    </ligand>
</feature>
<feature type="binding site" evidence="1">
    <location>
        <position position="436"/>
    </location>
    <ligand>
        <name>Zn(2+)</name>
        <dbReference type="ChEBI" id="CHEBI:29105"/>
    </ligand>
</feature>
<feature type="binding site" evidence="1">
    <location>
        <position position="442"/>
    </location>
    <ligand>
        <name>Zn(2+)</name>
        <dbReference type="ChEBI" id="CHEBI:29105"/>
    </ligand>
</feature>
<protein>
    <recommendedName>
        <fullName evidence="1">DNA ligase</fullName>
        <ecNumber evidence="1">6.5.1.2</ecNumber>
    </recommendedName>
    <alternativeName>
        <fullName evidence="1">Polydeoxyribonucleotide synthase [NAD(+)]</fullName>
    </alternativeName>
</protein>
<name>DNLJ_FRATF</name>
<proteinExistence type="inferred from homology"/>
<gene>
    <name evidence="1" type="primary">ligA</name>
    <name type="ordered locus">FTA_0711</name>
</gene>
<sequence length="678" mass="76481">MTPNEFFSIKYHILAKAELKAYIDKLADYLSQQSYLYHTLDKPIISDSDYDKLFRLLQDLVNDNPQFKPINSVLDRVGGEVLAGFETIKHKKKMTSLANVFSLEELRDFYDKIEYDIELECEPKMDGLAISIFYKNGKFDYAVTRGDGIQGEKVSENVKTIRNVPLKLNTSNPPEELEVRGEIILDKQSFLSLNEYMQTHENKTFANPRNAAAGSIRMLDSKVVAKRPLKLYSYGIGYFSKDFVYPETQFELMQLLQSFGFTISDNMFLAKNFSEVEEYHHKMSHQRADLAYDIDGLVFKINNIKLQDTIGYTARGPKWAIAYKFPAEEVESEVLNVEFQVGRTGAITPVARLKPVAVGGVIVSNATLHNINEIKRKDIRVGDRVIVRRAGDVIPEVVKSLPQYRKSDAQIVEMPTNCPVCDSKIENVNDQAIYRCTGGWHCQAQTTERLKHFVSRKAMDIDKLGAKLIEQLVAANLIKYPADIYKLNFEQLTGLERMAAKSSQNVLDSITKSKEPSLARFIFAIGIKDIGEVSSDALANHFGSLESFRDAKFEELIEINYIGEIIANNIVSFWHDSLNIKIVEEFLAIGIKIQNPVKVEHAYNESFTGKTVVITGSFENYGRTELTQLLKSIGAKVTSSVSKKTDMVICGDNAGSKLTKAQELGVEVILEDNLKDLL</sequence>
<reference key="1">
    <citation type="journal article" date="2009" name="PLoS ONE">
        <title>Complete genome sequence of Francisella tularensis subspecies holarctica FTNF002-00.</title>
        <authorList>
            <person name="Barabote R.D."/>
            <person name="Xie G."/>
            <person name="Brettin T.S."/>
            <person name="Hinrichs S.H."/>
            <person name="Fey P.D."/>
            <person name="Jay J.J."/>
            <person name="Engle J.L."/>
            <person name="Godbole S.D."/>
            <person name="Noronha J.M."/>
            <person name="Scheuermann R.H."/>
            <person name="Zhou L.W."/>
            <person name="Lion C."/>
            <person name="Dempsey M.P."/>
        </authorList>
    </citation>
    <scope>NUCLEOTIDE SEQUENCE [LARGE SCALE GENOMIC DNA]</scope>
    <source>
        <strain>FTNF002-00 / FTA</strain>
    </source>
</reference>